<comment type="function">
    <text evidence="1">Component of the ribosome, a large ribonucleoprotein complex responsible for the synthesis of proteins in the cell. The small ribosomal subunit (SSU) binds messenger RNAs (mRNAs) and translates the encoded message by selecting cognate aminoacyl-transfer RNA (tRNA) molecules. The large subunit (LSU) contains the ribosomal catalytic site termed the peptidyl transferase center (PTC), which catalyzes the formation of peptide bonds, thereby polymerizing the amino acids delivered by tRNAs into a polypeptide chain. The nascent polypeptides leave the ribosome through a tunnel in the LSU and interact with protein factors that function in enzymatic processing, targeting, and the membrane insertion of nascent chains at the exit of the ribosomal tunnel.</text>
</comment>
<comment type="subunit">
    <text evidence="1">Component of the large ribosomal subunit.</text>
</comment>
<comment type="subcellular location">
    <subcellularLocation>
        <location evidence="1">Nucleus</location>
    </subcellularLocation>
    <subcellularLocation>
        <location evidence="1">Cytoplasm</location>
    </subcellularLocation>
</comment>
<comment type="similarity">
    <text evidence="2">Belongs to the universal ribosomal protein uL5 family.</text>
</comment>
<organism>
    <name type="scientific">Tetrahymena thermophila</name>
    <dbReference type="NCBI Taxonomy" id="5911"/>
    <lineage>
        <taxon>Eukaryota</taxon>
        <taxon>Sar</taxon>
        <taxon>Alveolata</taxon>
        <taxon>Ciliophora</taxon>
        <taxon>Intramacronucleata</taxon>
        <taxon>Oligohymenophorea</taxon>
        <taxon>Hymenostomatida</taxon>
        <taxon>Tetrahymenina</taxon>
        <taxon>Tetrahymenidae</taxon>
        <taxon>Tetrahymena</taxon>
    </lineage>
</organism>
<evidence type="ECO:0000250" key="1">
    <source>
        <dbReference type="UniProtKB" id="P0C0W9"/>
    </source>
</evidence>
<evidence type="ECO:0000305" key="2"/>
<proteinExistence type="evidence at protein level"/>
<name>RL11_TETTH</name>
<protein>
    <recommendedName>
        <fullName evidence="2">Large ribosomal subunit protein uL5</fullName>
    </recommendedName>
    <alternativeName>
        <fullName>60S ribosomal protein L11</fullName>
    </alternativeName>
    <alternativeName>
        <fullName>L21</fullName>
    </alternativeName>
</protein>
<accession>P24119</accession>
<keyword id="KW-0002">3D-structure</keyword>
<keyword id="KW-0963">Cytoplasm</keyword>
<keyword id="KW-0539">Nucleus</keyword>
<keyword id="KW-0687">Ribonucleoprotein</keyword>
<keyword id="KW-0689">Ribosomal protein</keyword>
<keyword id="KW-0694">RNA-binding</keyword>
<keyword id="KW-0699">rRNA-binding</keyword>
<gene>
    <name type="primary">RPL11</name>
</gene>
<dbReference type="EMBL" id="M37892">
    <property type="protein sequence ID" value="AAB00917.1"/>
    <property type="molecule type" value="Genomic_DNA"/>
</dbReference>
<dbReference type="PIR" id="JU0456">
    <property type="entry name" value="JU0456"/>
</dbReference>
<dbReference type="PDB" id="4V8P">
    <property type="method" value="X-ray"/>
    <property type="resolution" value="3.52 A"/>
    <property type="chains" value="BD/CD/ED/GD=1-172"/>
</dbReference>
<dbReference type="PDBsum" id="4V8P"/>
<dbReference type="SMR" id="P24119"/>
<dbReference type="IntAct" id="P24119">
    <property type="interactions" value="1"/>
</dbReference>
<dbReference type="OMA" id="NPMKELK"/>
<dbReference type="GO" id="GO:0005737">
    <property type="term" value="C:cytoplasm"/>
    <property type="evidence" value="ECO:0007669"/>
    <property type="project" value="UniProtKB-SubCell"/>
</dbReference>
<dbReference type="GO" id="GO:0005634">
    <property type="term" value="C:nucleus"/>
    <property type="evidence" value="ECO:0007669"/>
    <property type="project" value="UniProtKB-SubCell"/>
</dbReference>
<dbReference type="GO" id="GO:1990904">
    <property type="term" value="C:ribonucleoprotein complex"/>
    <property type="evidence" value="ECO:0007669"/>
    <property type="project" value="UniProtKB-KW"/>
</dbReference>
<dbReference type="GO" id="GO:0005840">
    <property type="term" value="C:ribosome"/>
    <property type="evidence" value="ECO:0007669"/>
    <property type="project" value="UniProtKB-KW"/>
</dbReference>
<dbReference type="GO" id="GO:0019843">
    <property type="term" value="F:rRNA binding"/>
    <property type="evidence" value="ECO:0007669"/>
    <property type="project" value="UniProtKB-KW"/>
</dbReference>
<dbReference type="GO" id="GO:0003735">
    <property type="term" value="F:structural constituent of ribosome"/>
    <property type="evidence" value="ECO:0007669"/>
    <property type="project" value="InterPro"/>
</dbReference>
<dbReference type="GO" id="GO:0006412">
    <property type="term" value="P:translation"/>
    <property type="evidence" value="ECO:0007669"/>
    <property type="project" value="InterPro"/>
</dbReference>
<dbReference type="FunFam" id="3.30.1440.10:FF:000004">
    <property type="entry name" value="60S ribosomal protein L11, putative"/>
    <property type="match status" value="1"/>
</dbReference>
<dbReference type="Gene3D" id="3.30.1440.10">
    <property type="match status" value="1"/>
</dbReference>
<dbReference type="InterPro" id="IPR002132">
    <property type="entry name" value="Ribosomal_uL5"/>
</dbReference>
<dbReference type="InterPro" id="IPR031309">
    <property type="entry name" value="Ribosomal_uL5_C"/>
</dbReference>
<dbReference type="InterPro" id="IPR020929">
    <property type="entry name" value="Ribosomal_uL5_CS"/>
</dbReference>
<dbReference type="InterPro" id="IPR022803">
    <property type="entry name" value="Ribosomal_uL5_dom_sf"/>
</dbReference>
<dbReference type="InterPro" id="IPR031310">
    <property type="entry name" value="Ribosomal_uL5_N"/>
</dbReference>
<dbReference type="NCBIfam" id="NF003258">
    <property type="entry name" value="PRK04219.1"/>
    <property type="match status" value="1"/>
</dbReference>
<dbReference type="PANTHER" id="PTHR11994">
    <property type="entry name" value="60S RIBOSOMAL PROTEIN L11-RELATED"/>
    <property type="match status" value="1"/>
</dbReference>
<dbReference type="Pfam" id="PF00281">
    <property type="entry name" value="Ribosomal_L5"/>
    <property type="match status" value="1"/>
</dbReference>
<dbReference type="Pfam" id="PF00673">
    <property type="entry name" value="Ribosomal_L5_C"/>
    <property type="match status" value="1"/>
</dbReference>
<dbReference type="PIRSF" id="PIRSF002161">
    <property type="entry name" value="Ribosomal_L5"/>
    <property type="match status" value="1"/>
</dbReference>
<dbReference type="SUPFAM" id="SSF55282">
    <property type="entry name" value="RL5-like"/>
    <property type="match status" value="1"/>
</dbReference>
<dbReference type="PROSITE" id="PS00358">
    <property type="entry name" value="RIBOSOMAL_L5"/>
    <property type="match status" value="1"/>
</dbReference>
<sequence>MTDKKENKMREVKIAKLVINCCVGESGDKLTKAAKVLKDLSGQEPVFSRARYTIRSFGIKRNEKMAVHVTIRGDKARDILTRGLKVKEMELRKKNFSNTGNFGFGIQEHIDLGMKYDPSTGIFGMDFYVVLERPGTRVARRRRATSRVGNNQMISKEECINWFKTEFEGNVY</sequence>
<reference key="1">
    <citation type="journal article" date="1991" name="Gene">
        <title>Structure and evolution of the Tetrahymena thermophila gene encoding ribosomal protein L21.</title>
        <authorList>
            <person name="Rosendahl G."/>
            <person name="Andreasen P.H."/>
            <person name="Kristiansen K."/>
        </authorList>
    </citation>
    <scope>NUCLEOTIDE SEQUENCE [GENOMIC DNA]</scope>
</reference>
<reference key="2">
    <citation type="journal article" date="2011" name="Science">
        <title>Crystal structure of the eukaryotic 60S ribosomal subunit in complex with initiation factor 6.</title>
        <authorList>
            <person name="Klinge S."/>
            <person name="Voigts-Hoffmann F."/>
            <person name="Leibundgut M."/>
            <person name="Arpagaus S."/>
            <person name="Ban N."/>
        </authorList>
    </citation>
    <scope>X-RAY CRYSTALLOGRAPHY (3.52 ANGSTROMS) OF 60S RIBOSOME</scope>
</reference>
<feature type="chain" id="PRO_0000125093" description="Large ribosomal subunit protein uL5">
    <location>
        <begin position="1"/>
        <end position="172"/>
    </location>
</feature>